<gene>
    <name evidence="1" type="primary">hmuV</name>
    <name type="ordered locus">SG1540</name>
</gene>
<organism>
    <name type="scientific">Sodalis glossinidius (strain morsitans)</name>
    <dbReference type="NCBI Taxonomy" id="343509"/>
    <lineage>
        <taxon>Bacteria</taxon>
        <taxon>Pseudomonadati</taxon>
        <taxon>Pseudomonadota</taxon>
        <taxon>Gammaproteobacteria</taxon>
        <taxon>Enterobacterales</taxon>
        <taxon>Bruguierivoracaceae</taxon>
        <taxon>Sodalis</taxon>
    </lineage>
</organism>
<accession>Q2NSR0</accession>
<dbReference type="EC" id="7.6.2.-" evidence="1"/>
<dbReference type="EMBL" id="AP008232">
    <property type="protein sequence ID" value="BAE74815.1"/>
    <property type="molecule type" value="Genomic_DNA"/>
</dbReference>
<dbReference type="RefSeq" id="WP_011411360.1">
    <property type="nucleotide sequence ID" value="NC_007712.1"/>
</dbReference>
<dbReference type="SMR" id="Q2NSR0"/>
<dbReference type="STRING" id="343509.SG1540"/>
<dbReference type="KEGG" id="sgl:SG1540"/>
<dbReference type="eggNOG" id="COG4559">
    <property type="taxonomic scope" value="Bacteria"/>
</dbReference>
<dbReference type="HOGENOM" id="CLU_000604_1_11_6"/>
<dbReference type="OrthoDB" id="5292475at2"/>
<dbReference type="BioCyc" id="SGLO343509:SGP1_RS13770-MONOMER"/>
<dbReference type="Proteomes" id="UP000001932">
    <property type="component" value="Chromosome"/>
</dbReference>
<dbReference type="GO" id="GO:0005886">
    <property type="term" value="C:plasma membrane"/>
    <property type="evidence" value="ECO:0007669"/>
    <property type="project" value="UniProtKB-SubCell"/>
</dbReference>
<dbReference type="GO" id="GO:0005524">
    <property type="term" value="F:ATP binding"/>
    <property type="evidence" value="ECO:0007669"/>
    <property type="project" value="UniProtKB-KW"/>
</dbReference>
<dbReference type="GO" id="GO:0016887">
    <property type="term" value="F:ATP hydrolysis activity"/>
    <property type="evidence" value="ECO:0007669"/>
    <property type="project" value="InterPro"/>
</dbReference>
<dbReference type="CDD" id="cd03214">
    <property type="entry name" value="ABC_Iron-Siderophores_B12_Hemin"/>
    <property type="match status" value="1"/>
</dbReference>
<dbReference type="Gene3D" id="3.40.50.300">
    <property type="entry name" value="P-loop containing nucleotide triphosphate hydrolases"/>
    <property type="match status" value="1"/>
</dbReference>
<dbReference type="InterPro" id="IPR003593">
    <property type="entry name" value="AAA+_ATPase"/>
</dbReference>
<dbReference type="InterPro" id="IPR003439">
    <property type="entry name" value="ABC_transporter-like_ATP-bd"/>
</dbReference>
<dbReference type="InterPro" id="IPR017871">
    <property type="entry name" value="ABC_transporter-like_CS"/>
</dbReference>
<dbReference type="InterPro" id="IPR027417">
    <property type="entry name" value="P-loop_NTPase"/>
</dbReference>
<dbReference type="NCBIfam" id="NF010068">
    <property type="entry name" value="PRK13548.1"/>
    <property type="match status" value="1"/>
</dbReference>
<dbReference type="PANTHER" id="PTHR42794">
    <property type="entry name" value="HEMIN IMPORT ATP-BINDING PROTEIN HMUV"/>
    <property type="match status" value="1"/>
</dbReference>
<dbReference type="PANTHER" id="PTHR42794:SF1">
    <property type="entry name" value="HEMIN IMPORT ATP-BINDING PROTEIN HMUV"/>
    <property type="match status" value="1"/>
</dbReference>
<dbReference type="Pfam" id="PF00005">
    <property type="entry name" value="ABC_tran"/>
    <property type="match status" value="1"/>
</dbReference>
<dbReference type="SMART" id="SM00382">
    <property type="entry name" value="AAA"/>
    <property type="match status" value="1"/>
</dbReference>
<dbReference type="SUPFAM" id="SSF52540">
    <property type="entry name" value="P-loop containing nucleoside triphosphate hydrolases"/>
    <property type="match status" value="1"/>
</dbReference>
<dbReference type="PROSITE" id="PS00211">
    <property type="entry name" value="ABC_TRANSPORTER_1"/>
    <property type="match status" value="1"/>
</dbReference>
<dbReference type="PROSITE" id="PS50893">
    <property type="entry name" value="ABC_TRANSPORTER_2"/>
    <property type="match status" value="1"/>
</dbReference>
<dbReference type="PROSITE" id="PS51261">
    <property type="entry name" value="HMUV"/>
    <property type="match status" value="1"/>
</dbReference>
<protein>
    <recommendedName>
        <fullName evidence="1">Hemin import ATP-binding protein HmuV</fullName>
        <ecNumber evidence="1">7.6.2.-</ecNumber>
    </recommendedName>
</protein>
<name>HMUV_SODGM</name>
<feature type="chain" id="PRO_0000269630" description="Hemin import ATP-binding protein HmuV">
    <location>
        <begin position="1"/>
        <end position="260"/>
    </location>
</feature>
<feature type="domain" description="ABC transporter" evidence="1">
    <location>
        <begin position="6"/>
        <end position="242"/>
    </location>
</feature>
<feature type="binding site" evidence="1">
    <location>
        <begin position="38"/>
        <end position="45"/>
    </location>
    <ligand>
        <name>ATP</name>
        <dbReference type="ChEBI" id="CHEBI:30616"/>
    </ligand>
</feature>
<evidence type="ECO:0000255" key="1">
    <source>
        <dbReference type="HAMAP-Rule" id="MF_01718"/>
    </source>
</evidence>
<keyword id="KW-0067">ATP-binding</keyword>
<keyword id="KW-0997">Cell inner membrane</keyword>
<keyword id="KW-1003">Cell membrane</keyword>
<keyword id="KW-0472">Membrane</keyword>
<keyword id="KW-0547">Nucleotide-binding</keyword>
<keyword id="KW-1278">Translocase</keyword>
<keyword id="KW-0813">Transport</keyword>
<reference key="1">
    <citation type="journal article" date="2006" name="Genome Res.">
        <title>Massive genome erosion and functional adaptations provide insights into the symbiotic lifestyle of Sodalis glossinidius in the tsetse host.</title>
        <authorList>
            <person name="Toh H."/>
            <person name="Weiss B.L."/>
            <person name="Perkin S.A.H."/>
            <person name="Yamashita A."/>
            <person name="Oshima K."/>
            <person name="Hattori M."/>
            <person name="Aksoy S."/>
        </authorList>
    </citation>
    <scope>NUCLEOTIDE SEQUENCE [LARGE SCALE GENOMIC DNA]</scope>
    <source>
        <strain>morsitans</strain>
    </source>
</reference>
<proteinExistence type="inferred from homology"/>
<comment type="function">
    <text evidence="1">Part of the ABC transporter complex HmuTUV involved in hemin import. Responsible for energy coupling to the transport system.</text>
</comment>
<comment type="subunit">
    <text evidence="1">The complex is composed of two ATP-binding proteins (HmuV), two transmembrane proteins (HmuU) and a solute-binding protein (HmuT).</text>
</comment>
<comment type="subcellular location">
    <subcellularLocation>
        <location evidence="1">Cell inner membrane</location>
        <topology evidence="1">Peripheral membrane protein</topology>
    </subcellularLocation>
</comment>
<comment type="similarity">
    <text evidence="1">Belongs to the ABC transporter superfamily. Heme (hemin) importer (TC 3.A.1.14.5) family.</text>
</comment>
<sequence length="260" mass="28518">MSDALLHADNLHYRAGGRTLIEGVSLTLAPGEMVALIGPNGAGKSTLLRLLSGYLDPIQGQCRLQGRELAVWTAAQLARRRAVMAQQGSVAFSFRVSEVVAMARAPWSGTPATTVLAEVMTLTGCEMLASREFRRLSGGEQQRVRLAMALAQLWQQDGPEGWLFLDEPTSALDLYHQQALLRLLYQLTRAGKLAVCCILHDVNLAALWADRILLLQQGRLAASGTPAEVLTEVQLRACYQADLRVQTQQEDGVPQIYLRR</sequence>